<keyword id="KW-0066">ATP synthesis</keyword>
<keyword id="KW-0997">Cell inner membrane</keyword>
<keyword id="KW-1003">Cell membrane</keyword>
<keyword id="KW-0139">CF(1)</keyword>
<keyword id="KW-0375">Hydrogen ion transport</keyword>
<keyword id="KW-0406">Ion transport</keyword>
<keyword id="KW-0472">Membrane</keyword>
<keyword id="KW-0813">Transport</keyword>
<gene>
    <name evidence="1" type="primary">atpH</name>
    <name type="ordered locus">FTN_1649</name>
</gene>
<proteinExistence type="inferred from homology"/>
<evidence type="ECO:0000255" key="1">
    <source>
        <dbReference type="HAMAP-Rule" id="MF_01416"/>
    </source>
</evidence>
<organism>
    <name type="scientific">Francisella tularensis subsp. novicida (strain U112)</name>
    <dbReference type="NCBI Taxonomy" id="401614"/>
    <lineage>
        <taxon>Bacteria</taxon>
        <taxon>Pseudomonadati</taxon>
        <taxon>Pseudomonadota</taxon>
        <taxon>Gammaproteobacteria</taxon>
        <taxon>Thiotrichales</taxon>
        <taxon>Francisellaceae</taxon>
        <taxon>Francisella</taxon>
    </lineage>
</organism>
<comment type="function">
    <text evidence="1">F(1)F(0) ATP synthase produces ATP from ADP in the presence of a proton or sodium gradient. F-type ATPases consist of two structural domains, F(1) containing the extramembraneous catalytic core and F(0) containing the membrane proton channel, linked together by a central stalk and a peripheral stalk. During catalysis, ATP synthesis in the catalytic domain of F(1) is coupled via a rotary mechanism of the central stalk subunits to proton translocation.</text>
</comment>
<comment type="function">
    <text evidence="1">This protein is part of the stalk that links CF(0) to CF(1). It either transmits conformational changes from CF(0) to CF(1) or is implicated in proton conduction.</text>
</comment>
<comment type="subunit">
    <text evidence="1">F-type ATPases have 2 components, F(1) - the catalytic core - and F(0) - the membrane proton channel. F(1) has five subunits: alpha(3), beta(3), gamma(1), delta(1), epsilon(1). F(0) has three main subunits: a(1), b(2) and c(10-14). The alpha and beta chains form an alternating ring which encloses part of the gamma chain. F(1) is attached to F(0) by a central stalk formed by the gamma and epsilon chains, while a peripheral stalk is formed by the delta and b chains.</text>
</comment>
<comment type="subcellular location">
    <subcellularLocation>
        <location evidence="1">Cell inner membrane</location>
        <topology evidence="1">Peripheral membrane protein</topology>
    </subcellularLocation>
</comment>
<comment type="similarity">
    <text evidence="1">Belongs to the ATPase delta chain family.</text>
</comment>
<protein>
    <recommendedName>
        <fullName evidence="1">ATP synthase subunit delta</fullName>
    </recommendedName>
    <alternativeName>
        <fullName evidence="1">ATP synthase F(1) sector subunit delta</fullName>
    </alternativeName>
    <alternativeName>
        <fullName evidence="1">F-type ATPase subunit delta</fullName>
        <shortName evidence="1">F-ATPase subunit delta</shortName>
    </alternativeName>
</protein>
<accession>A0Q8E2</accession>
<name>ATPD_FRATN</name>
<dbReference type="EMBL" id="CP000439">
    <property type="protein sequence ID" value="ABK90507.1"/>
    <property type="molecule type" value="Genomic_DNA"/>
</dbReference>
<dbReference type="RefSeq" id="WP_003017341.1">
    <property type="nucleotide sequence ID" value="NZ_CP009633.1"/>
</dbReference>
<dbReference type="SMR" id="A0Q8E2"/>
<dbReference type="KEGG" id="ftn:FTN_1649"/>
<dbReference type="KEGG" id="ftx:AW25_339"/>
<dbReference type="BioCyc" id="FTUL401614:G1G75-1710-MONOMER"/>
<dbReference type="Proteomes" id="UP000000762">
    <property type="component" value="Chromosome"/>
</dbReference>
<dbReference type="GO" id="GO:0005886">
    <property type="term" value="C:plasma membrane"/>
    <property type="evidence" value="ECO:0007669"/>
    <property type="project" value="UniProtKB-SubCell"/>
</dbReference>
<dbReference type="GO" id="GO:0045259">
    <property type="term" value="C:proton-transporting ATP synthase complex"/>
    <property type="evidence" value="ECO:0007669"/>
    <property type="project" value="UniProtKB-KW"/>
</dbReference>
<dbReference type="GO" id="GO:0046933">
    <property type="term" value="F:proton-transporting ATP synthase activity, rotational mechanism"/>
    <property type="evidence" value="ECO:0007669"/>
    <property type="project" value="UniProtKB-UniRule"/>
</dbReference>
<dbReference type="Gene3D" id="1.10.520.20">
    <property type="entry name" value="N-terminal domain of the delta subunit of the F1F0-ATP synthase"/>
    <property type="match status" value="1"/>
</dbReference>
<dbReference type="HAMAP" id="MF_01416">
    <property type="entry name" value="ATP_synth_delta_bact"/>
    <property type="match status" value="1"/>
</dbReference>
<dbReference type="InterPro" id="IPR026015">
    <property type="entry name" value="ATP_synth_OSCP/delta_N_sf"/>
</dbReference>
<dbReference type="InterPro" id="IPR020781">
    <property type="entry name" value="ATPase_OSCP/d_CS"/>
</dbReference>
<dbReference type="InterPro" id="IPR000711">
    <property type="entry name" value="ATPase_OSCP/dsu"/>
</dbReference>
<dbReference type="NCBIfam" id="TIGR01145">
    <property type="entry name" value="ATP_synt_delta"/>
    <property type="match status" value="1"/>
</dbReference>
<dbReference type="NCBIfam" id="NF004402">
    <property type="entry name" value="PRK05758.2-2"/>
    <property type="match status" value="1"/>
</dbReference>
<dbReference type="PANTHER" id="PTHR11910">
    <property type="entry name" value="ATP SYNTHASE DELTA CHAIN"/>
    <property type="match status" value="1"/>
</dbReference>
<dbReference type="Pfam" id="PF00213">
    <property type="entry name" value="OSCP"/>
    <property type="match status" value="1"/>
</dbReference>
<dbReference type="PRINTS" id="PR00125">
    <property type="entry name" value="ATPASEDELTA"/>
</dbReference>
<dbReference type="SUPFAM" id="SSF47928">
    <property type="entry name" value="N-terminal domain of the delta subunit of the F1F0-ATP synthase"/>
    <property type="match status" value="1"/>
</dbReference>
<dbReference type="PROSITE" id="PS00389">
    <property type="entry name" value="ATPASE_DELTA"/>
    <property type="match status" value="1"/>
</dbReference>
<reference key="1">
    <citation type="journal article" date="2007" name="Genome Biol.">
        <title>Comparison of Francisella tularensis genomes reveals evolutionary events associated with the emergence of human pathogenic strains.</title>
        <authorList>
            <person name="Rohmer L."/>
            <person name="Fong C."/>
            <person name="Abmayr S."/>
            <person name="Wasnick M."/>
            <person name="Larson Freeman T.J."/>
            <person name="Radey M."/>
            <person name="Guina T."/>
            <person name="Svensson K."/>
            <person name="Hayden H.S."/>
            <person name="Jacobs M."/>
            <person name="Gallagher L.A."/>
            <person name="Manoil C."/>
            <person name="Ernst R.K."/>
            <person name="Drees B."/>
            <person name="Buckley D."/>
            <person name="Haugen E."/>
            <person name="Bovee D."/>
            <person name="Zhou Y."/>
            <person name="Chang J."/>
            <person name="Levy R."/>
            <person name="Lim R."/>
            <person name="Gillett W."/>
            <person name="Guenthener D."/>
            <person name="Kang A."/>
            <person name="Shaffer S.A."/>
            <person name="Taylor G."/>
            <person name="Chen J."/>
            <person name="Gallis B."/>
            <person name="D'Argenio D.A."/>
            <person name="Forsman M."/>
            <person name="Olson M.V."/>
            <person name="Goodlett D.R."/>
            <person name="Kaul R."/>
            <person name="Miller S.I."/>
            <person name="Brittnacher M.J."/>
        </authorList>
    </citation>
    <scope>NUCLEOTIDE SEQUENCE [LARGE SCALE GENOMIC DNA]</scope>
    <source>
        <strain>U112</strain>
    </source>
</reference>
<feature type="chain" id="PRO_1000184717" description="ATP synthase subunit delta">
    <location>
        <begin position="1"/>
        <end position="174"/>
    </location>
</feature>
<sequence length="174" mass="19202">MTNISVIAKPYAKAAFEFANEHNLLQQWSKLLQTFSELIKDKSVAAIVSSPTISQIEVVDALKKQLDENFFNFLALIAENKKMLIMPEIADQFESIKNIHNNVRVADVTLAYATDKNILDSLKTSLEKKFGCTIDMHINIDPAIIGGAVVKVGDTVIDSSVSGHLEKLKSILLS</sequence>